<evidence type="ECO:0000250" key="1"/>
<evidence type="ECO:0000255" key="2">
    <source>
        <dbReference type="PROSITE-ProRule" id="PRU00541"/>
    </source>
</evidence>
<evidence type="ECO:0000255" key="3">
    <source>
        <dbReference type="PROSITE-ProRule" id="PRU00542"/>
    </source>
</evidence>
<evidence type="ECO:0000305" key="4"/>
<dbReference type="EC" id="3.6.1.15"/>
<dbReference type="EMBL" id="U60315">
    <property type="protein sequence ID" value="AAC55228.1"/>
    <property type="molecule type" value="Genomic_DNA"/>
</dbReference>
<dbReference type="PIR" id="T30702">
    <property type="entry name" value="T30702"/>
</dbReference>
<dbReference type="RefSeq" id="NP_044051.1">
    <property type="nucleotide sequence ID" value="NC_001731.1"/>
</dbReference>
<dbReference type="SMR" id="Q98267"/>
<dbReference type="GeneID" id="1487119"/>
<dbReference type="KEGG" id="vg:1487119"/>
<dbReference type="OrthoDB" id="1247at10239"/>
<dbReference type="Proteomes" id="UP000000869">
    <property type="component" value="Genome"/>
</dbReference>
<dbReference type="GO" id="GO:0044423">
    <property type="term" value="C:virion component"/>
    <property type="evidence" value="ECO:0007669"/>
    <property type="project" value="UniProtKB-KW"/>
</dbReference>
<dbReference type="GO" id="GO:0005524">
    <property type="term" value="F:ATP binding"/>
    <property type="evidence" value="ECO:0007669"/>
    <property type="project" value="UniProtKB-KW"/>
</dbReference>
<dbReference type="GO" id="GO:0003677">
    <property type="term" value="F:DNA binding"/>
    <property type="evidence" value="ECO:0007669"/>
    <property type="project" value="UniProtKB-KW"/>
</dbReference>
<dbReference type="GO" id="GO:0017111">
    <property type="term" value="F:ribonucleoside triphosphate phosphatase activity"/>
    <property type="evidence" value="ECO:0007669"/>
    <property type="project" value="UniProtKB-EC"/>
</dbReference>
<dbReference type="GO" id="GO:0006351">
    <property type="term" value="P:DNA-templated transcription"/>
    <property type="evidence" value="ECO:0007669"/>
    <property type="project" value="InterPro"/>
</dbReference>
<dbReference type="Gene3D" id="3.40.50.300">
    <property type="entry name" value="P-loop containing nucleotide triphosphate hydrolases"/>
    <property type="match status" value="1"/>
</dbReference>
<dbReference type="Gene3D" id="3.40.50.10810">
    <property type="entry name" value="Tandem AAA-ATPase domain"/>
    <property type="match status" value="1"/>
</dbReference>
<dbReference type="InterPro" id="IPR014001">
    <property type="entry name" value="Helicase_ATP-bd"/>
</dbReference>
<dbReference type="InterPro" id="IPR001650">
    <property type="entry name" value="Helicase_C-like"/>
</dbReference>
<dbReference type="InterPro" id="IPR013676">
    <property type="entry name" value="NPHI_C"/>
</dbReference>
<dbReference type="InterPro" id="IPR027417">
    <property type="entry name" value="P-loop_NTPase"/>
</dbReference>
<dbReference type="InterPro" id="IPR038718">
    <property type="entry name" value="SNF2-like_sf"/>
</dbReference>
<dbReference type="InterPro" id="IPR000330">
    <property type="entry name" value="SNF2_N"/>
</dbReference>
<dbReference type="PANTHER" id="PTHR10799">
    <property type="entry name" value="SNF2/RAD54 HELICASE FAMILY"/>
    <property type="match status" value="1"/>
</dbReference>
<dbReference type="Pfam" id="PF00271">
    <property type="entry name" value="Helicase_C"/>
    <property type="match status" value="1"/>
</dbReference>
<dbReference type="Pfam" id="PF08469">
    <property type="entry name" value="NPHI_C"/>
    <property type="match status" value="1"/>
</dbReference>
<dbReference type="Pfam" id="PF00176">
    <property type="entry name" value="SNF2-rel_dom"/>
    <property type="match status" value="1"/>
</dbReference>
<dbReference type="SMART" id="SM00487">
    <property type="entry name" value="DEXDc"/>
    <property type="match status" value="1"/>
</dbReference>
<dbReference type="SMART" id="SM00490">
    <property type="entry name" value="HELICc"/>
    <property type="match status" value="1"/>
</dbReference>
<dbReference type="SUPFAM" id="SSF52540">
    <property type="entry name" value="P-loop containing nucleoside triphosphate hydrolases"/>
    <property type="match status" value="2"/>
</dbReference>
<dbReference type="PROSITE" id="PS51192">
    <property type="entry name" value="HELICASE_ATP_BIND_1"/>
    <property type="match status" value="1"/>
</dbReference>
<dbReference type="PROSITE" id="PS51194">
    <property type="entry name" value="HELICASE_CTER"/>
    <property type="match status" value="1"/>
</dbReference>
<reference key="1">
    <citation type="journal article" date="1996" name="Science">
        <title>Genome sequence of a human tumorigenic poxvirus: prediction of specific host response-evasion genes.</title>
        <authorList>
            <person name="Senkevich T.G."/>
            <person name="Bugert J.J."/>
            <person name="Sisler J.R."/>
            <person name="Koonin E.V."/>
            <person name="Darai G."/>
            <person name="Moss B."/>
        </authorList>
    </citation>
    <scope>NUCLEOTIDE SEQUENCE [LARGE SCALE GENOMIC DNA]</scope>
</reference>
<proteinExistence type="inferred from homology"/>
<feature type="chain" id="PRO_0000099104" description="Nucleoside triphosphatase I">
    <location>
        <begin position="1"/>
        <end position="634"/>
    </location>
</feature>
<feature type="domain" description="Helicase ATP-binding" evidence="2">
    <location>
        <begin position="41"/>
        <end position="203"/>
    </location>
</feature>
<feature type="domain" description="Helicase C-terminal" evidence="3">
    <location>
        <begin position="355"/>
        <end position="531"/>
    </location>
</feature>
<feature type="region of interest" description="Binding to the cap-specific mRNA (nucleoside-2'-O-)-methyltransferase" evidence="1">
    <location>
        <begin position="456"/>
        <end position="523"/>
    </location>
</feature>
<feature type="short sequence motif" description="DEXH box">
    <location>
        <begin position="140"/>
        <end position="143"/>
    </location>
</feature>
<feature type="binding site" evidence="2">
    <location>
        <begin position="54"/>
        <end position="61"/>
    </location>
    <ligand>
        <name>ATP</name>
        <dbReference type="ChEBI" id="CHEBI:30616"/>
    </ligand>
</feature>
<comment type="function">
    <text evidence="1">DNA-dependent ATPase required for providing the needed energy to achieve the termination of early transcripts. Acts in concert with the RAP94 subunit of the virion RNA polymerase and the capping enzyme/VTF to catalyze release of UUUUUNU-containing nascent RNA from the elongation complex. NPH-I must bind ssDNA in order to exhibit ATPase activity (By similarity).</text>
</comment>
<comment type="catalytic activity">
    <reaction>
        <text>a ribonucleoside 5'-triphosphate + H2O = a ribonucleoside 5'-diphosphate + phosphate + H(+)</text>
        <dbReference type="Rhea" id="RHEA:23680"/>
        <dbReference type="ChEBI" id="CHEBI:15377"/>
        <dbReference type="ChEBI" id="CHEBI:15378"/>
        <dbReference type="ChEBI" id="CHEBI:43474"/>
        <dbReference type="ChEBI" id="CHEBI:57930"/>
        <dbReference type="ChEBI" id="CHEBI:61557"/>
        <dbReference type="EC" id="3.6.1.15"/>
    </reaction>
</comment>
<comment type="subunit">
    <text evidence="1">Monomer. Interacts (via C-terminus) with RAP94 (via N-terminus). Interacts with the cap-specific mRNA (nucleoside-2'-O-)-methyltransferase (By similarity).</text>
</comment>
<comment type="subcellular location">
    <subcellularLocation>
        <location evidence="1">Virion</location>
    </subcellularLocation>
    <text evidence="1">Virion core enzyme.</text>
</comment>
<comment type="similarity">
    <text evidence="4">Belongs to the helicase family. NPH I subfamily.</text>
</comment>
<protein>
    <recommendedName>
        <fullName>Nucleoside triphosphatase I</fullName>
        <ecNumber>3.6.1.15</ecNumber>
    </recommendedName>
    <alternativeName>
        <fullName>NPH-I</fullName>
    </alternativeName>
    <alternativeName>
        <fullName>Nucleoside triphosphate phosphohydrolase I</fullName>
        <shortName>NPH I</shortName>
    </alternativeName>
</protein>
<organismHost>
    <name type="scientific">Homo sapiens</name>
    <name type="common">Human</name>
    <dbReference type="NCBI Taxonomy" id="9606"/>
</organismHost>
<sequence length="634" mass="72103">MNLHAAYIDYALRRSQHMQAEMSGADNVLLKDYQLFVAKVFLGLDSMNSLLLFQETGVGKTVTAVYMLKHLRFLYTSWTVLVLVKKALVEEPWMNTILRFAPEVAKDCVFMNYDDQNFHNKFFTNIKTVSARSRIFVIIDECHNFISKSLSREDGRARNTKHVYNFLARHIASSHNKLLCLSATPIVNNVREFALLVNLLRPGVLPPQSLFHNKRLLDEAELVSKLGCICSYLVHHEASIFEDVEGSELFARKRVLLKYVRMSAKQEDIYHKARAAEFRSGIAVFRVHRRMAATFAFDEFPVRKNLTPDEYDALVASLVRDFEALFAGRALSDATRARLRAGEPIECAASAEDLSLYQALYEHSCKYAEVCVAILASPGKCLVFEPFINLSGIRIFVKYLEVFGISYIEFSSRTKDTRTRAVAEFNRVENTNGELIKTCVFSLSGNEGISFLSINDIFILDMTWNEASLKQIIGRAIRLHSHANNPPERRYVNVHFVVAQLGSGAPSVDDDLLEIIQNKAREFSQLYRVLKLASIEWIHQHCREFAPVDDEAGFRALCSRAIDVTRGASTRRALATGENIWYAFSTLMITVHPGFKTEDGRVYDADGNFLTTMPERPIVRVQGTRLVYIFPELR</sequence>
<organism>
    <name type="scientific">Molluscum contagiosum virus subtype 1</name>
    <name type="common">MOCV</name>
    <name type="synonym">MCVI</name>
    <dbReference type="NCBI Taxonomy" id="10280"/>
    <lineage>
        <taxon>Viruses</taxon>
        <taxon>Varidnaviria</taxon>
        <taxon>Bamfordvirae</taxon>
        <taxon>Nucleocytoviricota</taxon>
        <taxon>Pokkesviricetes</taxon>
        <taxon>Chitovirales</taxon>
        <taxon>Poxviridae</taxon>
        <taxon>Chordopoxvirinae</taxon>
        <taxon>Molluscipoxvirus</taxon>
        <taxon>Molluscum contagiosum virus</taxon>
    </lineage>
</organism>
<accession>Q98267</accession>
<keyword id="KW-0067">ATP-binding</keyword>
<keyword id="KW-0238">DNA-binding</keyword>
<keyword id="KW-0378">Hydrolase</keyword>
<keyword id="KW-0547">Nucleotide-binding</keyword>
<keyword id="KW-1185">Reference proteome</keyword>
<keyword id="KW-0804">Transcription</keyword>
<keyword id="KW-0946">Virion</keyword>
<gene>
    <name type="primary">NPH1</name>
    <name type="ordered locus">MC100L</name>
</gene>
<name>NTP1_MCV1</name>